<name>URED_RHILW</name>
<comment type="function">
    <text evidence="1">Required for maturation of urease via the functional incorporation of the urease nickel metallocenter.</text>
</comment>
<comment type="subunit">
    <text evidence="1">UreD, UreF and UreG form a complex that acts as a GTP-hydrolysis-dependent molecular chaperone, activating the urease apoprotein by helping to assemble the nickel containing metallocenter of UreC. The UreE protein probably delivers the nickel.</text>
</comment>
<comment type="subcellular location">
    <subcellularLocation>
        <location evidence="1">Cytoplasm</location>
    </subcellularLocation>
</comment>
<comment type="similarity">
    <text evidence="1">Belongs to the UreD family.</text>
</comment>
<reference key="1">
    <citation type="journal article" date="2010" name="Stand. Genomic Sci.">
        <title>Complete genome sequence of Rhizobium leguminosarum bv trifolii strain WSM2304, an effective microsymbiont of the South American clover Trifolium polymorphum.</title>
        <authorList>
            <person name="Reeve W."/>
            <person name="O'Hara G."/>
            <person name="Chain P."/>
            <person name="Ardley J."/>
            <person name="Brau L."/>
            <person name="Nandesena K."/>
            <person name="Tiwari R."/>
            <person name="Malfatti S."/>
            <person name="Kiss H."/>
            <person name="Lapidus A."/>
            <person name="Copeland A."/>
            <person name="Nolan M."/>
            <person name="Land M."/>
            <person name="Ivanova N."/>
            <person name="Mavromatis K."/>
            <person name="Markowitz V."/>
            <person name="Kyrpides N."/>
            <person name="Melino V."/>
            <person name="Denton M."/>
            <person name="Yates R."/>
            <person name="Howieson J."/>
        </authorList>
    </citation>
    <scope>NUCLEOTIDE SEQUENCE [LARGE SCALE GENOMIC DNA]</scope>
    <source>
        <strain>WSM2304</strain>
    </source>
</reference>
<sequence>MMIAAAGTRPQRAEGRGHLAAKLLDGRTRLRELYQEGAAKIRLPDTFDASMEAVIINTAGGLTGGDRMDWSVEAGAGTRIDVTTQACEKIYKASAGTAEVRTSIKVGTQARVDWLPQETILFDRSALFRRLDVDLDESAEFLAVEAILLGRKAMGETVMTGLFRDRWRIRRSGRLIHAEELRLSEGVAALAARQAVLGGQVAFATLLYAGPLAEAYLGKVRPLVEGAMGGASAWDGKLVVRLAAADGFSLRKILIRVISALRNGAPVPKVWNL</sequence>
<gene>
    <name evidence="1" type="primary">ureD</name>
    <name type="ordered locus">Rleg2_3057</name>
</gene>
<accession>B5ZMP6</accession>
<organism>
    <name type="scientific">Rhizobium leguminosarum bv. trifolii (strain WSM2304)</name>
    <dbReference type="NCBI Taxonomy" id="395492"/>
    <lineage>
        <taxon>Bacteria</taxon>
        <taxon>Pseudomonadati</taxon>
        <taxon>Pseudomonadota</taxon>
        <taxon>Alphaproteobacteria</taxon>
        <taxon>Hyphomicrobiales</taxon>
        <taxon>Rhizobiaceae</taxon>
        <taxon>Rhizobium/Agrobacterium group</taxon>
        <taxon>Rhizobium</taxon>
    </lineage>
</organism>
<protein>
    <recommendedName>
        <fullName evidence="1">Urease accessory protein UreD</fullName>
    </recommendedName>
</protein>
<evidence type="ECO:0000255" key="1">
    <source>
        <dbReference type="HAMAP-Rule" id="MF_01384"/>
    </source>
</evidence>
<feature type="chain" id="PRO_1000145097" description="Urease accessory protein UreD">
    <location>
        <begin position="1"/>
        <end position="273"/>
    </location>
</feature>
<keyword id="KW-0143">Chaperone</keyword>
<keyword id="KW-0963">Cytoplasm</keyword>
<keyword id="KW-0996">Nickel insertion</keyword>
<keyword id="KW-1185">Reference proteome</keyword>
<dbReference type="EMBL" id="CP001191">
    <property type="protein sequence ID" value="ACI56324.1"/>
    <property type="molecule type" value="Genomic_DNA"/>
</dbReference>
<dbReference type="RefSeq" id="WP_012558727.1">
    <property type="nucleotide sequence ID" value="NC_011369.1"/>
</dbReference>
<dbReference type="SMR" id="B5ZMP6"/>
<dbReference type="STRING" id="395492.Rleg2_3057"/>
<dbReference type="KEGG" id="rlt:Rleg2_3057"/>
<dbReference type="eggNOG" id="COG0829">
    <property type="taxonomic scope" value="Bacteria"/>
</dbReference>
<dbReference type="HOGENOM" id="CLU_056339_2_0_5"/>
<dbReference type="Proteomes" id="UP000008330">
    <property type="component" value="Chromosome"/>
</dbReference>
<dbReference type="GO" id="GO:0005737">
    <property type="term" value="C:cytoplasm"/>
    <property type="evidence" value="ECO:0007669"/>
    <property type="project" value="UniProtKB-SubCell"/>
</dbReference>
<dbReference type="GO" id="GO:0016151">
    <property type="term" value="F:nickel cation binding"/>
    <property type="evidence" value="ECO:0007669"/>
    <property type="project" value="UniProtKB-UniRule"/>
</dbReference>
<dbReference type="HAMAP" id="MF_01384">
    <property type="entry name" value="UreD"/>
    <property type="match status" value="1"/>
</dbReference>
<dbReference type="InterPro" id="IPR002669">
    <property type="entry name" value="UreD"/>
</dbReference>
<dbReference type="PANTHER" id="PTHR33643">
    <property type="entry name" value="UREASE ACCESSORY PROTEIN D"/>
    <property type="match status" value="1"/>
</dbReference>
<dbReference type="PANTHER" id="PTHR33643:SF1">
    <property type="entry name" value="UREASE ACCESSORY PROTEIN D"/>
    <property type="match status" value="1"/>
</dbReference>
<dbReference type="Pfam" id="PF01774">
    <property type="entry name" value="UreD"/>
    <property type="match status" value="1"/>
</dbReference>
<proteinExistence type="inferred from homology"/>